<keyword id="KW-0002">3D-structure</keyword>
<keyword id="KW-0007">Acetylation</keyword>
<keyword id="KW-0903">Direct protein sequencing</keyword>
<keyword id="KW-0597">Phosphoprotein</keyword>
<keyword id="KW-0647">Proteasome</keyword>
<keyword id="KW-1185">Reference proteome</keyword>
<keyword id="KW-0677">Repeat</keyword>
<gene>
    <name type="primary">RPN2</name>
    <name type="synonym">SEN3</name>
    <name type="ordered locus">YIL075C</name>
</gene>
<comment type="function">
    <text evidence="5">Acts as a regulatory subunit of the 26S proteasome which is involved in the ATP-dependent degradation of ubiquitinated proteins.</text>
</comment>
<comment type="subunit">
    <text evidence="2">Interacts with UBR1.</text>
</comment>
<comment type="interaction">
    <interactant intactId="EBI-15919">
        <id>P32565</id>
    </interactant>
    <interactant intactId="EBI-15913">
        <id>P38764</id>
        <label>RPN1</label>
    </interactant>
    <organismsDiffer>false</organismsDiffer>
    <experiments>4</experiments>
</comment>
<comment type="interaction">
    <interactant intactId="EBI-15919">
        <id>P32565</id>
    </interactant>
    <interactant intactId="EBI-32948">
        <id>O13563</id>
        <label>RPN13</label>
    </interactant>
    <organismsDiffer>false</organismsDiffer>
    <experiments>3</experiments>
</comment>
<comment type="interaction">
    <interactant intactId="EBI-15919">
        <id>P32565</id>
    </interactant>
    <interactant intactId="EBI-31337">
        <id>O94742</id>
        <label>SEM1</label>
    </interactant>
    <organismsDiffer>false</organismsDiffer>
    <experiments>2</experiments>
</comment>
<comment type="interaction">
    <interactant intactId="EBI-15919">
        <id>P32565</id>
    </interactant>
    <interactant intactId="EBI-19909">
        <id>P19812</id>
        <label>UBR1</label>
    </interactant>
    <organismsDiffer>false</organismsDiffer>
    <experiments>2</experiments>
</comment>
<comment type="PTM">
    <text evidence="3">N-acetylated by NAT1.</text>
</comment>
<comment type="miscellaneous">
    <text evidence="4">Present with 4750 molecules/cell in log phase SD medium.</text>
</comment>
<comment type="similarity">
    <text evidence="6">Belongs to the proteasome subunit S1 family.</text>
</comment>
<accession>P32565</accession>
<accession>D6VVK9</accession>
<name>RPN2_YEAST</name>
<dbReference type="EMBL" id="L06321">
    <property type="protein sequence ID" value="AAA87613.1"/>
    <property type="molecule type" value="Genomic_DNA"/>
</dbReference>
<dbReference type="EMBL" id="Z37997">
    <property type="protein sequence ID" value="CAA86095.1"/>
    <property type="molecule type" value="Genomic_DNA"/>
</dbReference>
<dbReference type="EMBL" id="BK006942">
    <property type="protein sequence ID" value="DAA08475.1"/>
    <property type="molecule type" value="Genomic_DNA"/>
</dbReference>
<dbReference type="PIR" id="S48369">
    <property type="entry name" value="S48369"/>
</dbReference>
<dbReference type="RefSeq" id="NP_012190.1">
    <property type="nucleotide sequence ID" value="NM_001179425.1"/>
</dbReference>
<dbReference type="PDB" id="3JCO">
    <property type="method" value="EM"/>
    <property type="resolution" value="4.80 A"/>
    <property type="chains" value="N=1-945"/>
</dbReference>
<dbReference type="PDB" id="3JCP">
    <property type="method" value="EM"/>
    <property type="resolution" value="4.60 A"/>
    <property type="chains" value="N=1-945"/>
</dbReference>
<dbReference type="PDB" id="4ADY">
    <property type="method" value="X-ray"/>
    <property type="resolution" value="2.70 A"/>
    <property type="chains" value="A/B=2-945"/>
</dbReference>
<dbReference type="PDB" id="4CR2">
    <property type="method" value="EM"/>
    <property type="resolution" value="7.70 A"/>
    <property type="chains" value="N=1-945"/>
</dbReference>
<dbReference type="PDB" id="4CR3">
    <property type="method" value="EM"/>
    <property type="resolution" value="9.30 A"/>
    <property type="chains" value="N=1-945"/>
</dbReference>
<dbReference type="PDB" id="4CR4">
    <property type="method" value="EM"/>
    <property type="resolution" value="8.80 A"/>
    <property type="chains" value="N=1-945"/>
</dbReference>
<dbReference type="PDB" id="5A5B">
    <property type="method" value="EM"/>
    <property type="resolution" value="9.50 A"/>
    <property type="chains" value="N=1-945"/>
</dbReference>
<dbReference type="PDB" id="5MPB">
    <property type="method" value="EM"/>
    <property type="resolution" value="7.80 A"/>
    <property type="chains" value="N=1-945"/>
</dbReference>
<dbReference type="PDB" id="5MPC">
    <property type="method" value="EM"/>
    <property type="resolution" value="7.70 A"/>
    <property type="chains" value="N=1-945"/>
</dbReference>
<dbReference type="PDB" id="5MPD">
    <property type="method" value="EM"/>
    <property type="resolution" value="4.10 A"/>
    <property type="chains" value="N=1-945"/>
</dbReference>
<dbReference type="PDB" id="5MPE">
    <property type="method" value="EM"/>
    <property type="resolution" value="4.50 A"/>
    <property type="chains" value="N=1-945"/>
</dbReference>
<dbReference type="PDB" id="5WVI">
    <property type="method" value="EM"/>
    <property type="resolution" value="6.30 A"/>
    <property type="chains" value="N=1-945"/>
</dbReference>
<dbReference type="PDB" id="5WVK">
    <property type="method" value="EM"/>
    <property type="resolution" value="4.20 A"/>
    <property type="chains" value="N=1-945"/>
</dbReference>
<dbReference type="PDB" id="6FVT">
    <property type="method" value="EM"/>
    <property type="resolution" value="4.10 A"/>
    <property type="chains" value="N=4-925"/>
</dbReference>
<dbReference type="PDB" id="6FVU">
    <property type="method" value="EM"/>
    <property type="resolution" value="4.50 A"/>
    <property type="chains" value="N=4-925"/>
</dbReference>
<dbReference type="PDB" id="6FVV">
    <property type="method" value="EM"/>
    <property type="resolution" value="5.40 A"/>
    <property type="chains" value="N=4-925"/>
</dbReference>
<dbReference type="PDB" id="6FVW">
    <property type="method" value="EM"/>
    <property type="resolution" value="4.50 A"/>
    <property type="chains" value="N=4-925"/>
</dbReference>
<dbReference type="PDB" id="6FVX">
    <property type="method" value="EM"/>
    <property type="resolution" value="4.90 A"/>
    <property type="chains" value="N=4-925"/>
</dbReference>
<dbReference type="PDB" id="6FVY">
    <property type="method" value="EM"/>
    <property type="resolution" value="6.10 A"/>
    <property type="chains" value="N=4-925"/>
</dbReference>
<dbReference type="PDB" id="6J2C">
    <property type="method" value="EM"/>
    <property type="resolution" value="7.00 A"/>
    <property type="chains" value="N=1-945"/>
</dbReference>
<dbReference type="PDB" id="6J2N">
    <property type="method" value="EM"/>
    <property type="resolution" value="7.50 A"/>
    <property type="chains" value="N=1-945"/>
</dbReference>
<dbReference type="PDB" id="6J2Q">
    <property type="method" value="EM"/>
    <property type="resolution" value="3.80 A"/>
    <property type="chains" value="N=1-945"/>
</dbReference>
<dbReference type="PDB" id="6J2X">
    <property type="method" value="EM"/>
    <property type="resolution" value="3.80 A"/>
    <property type="chains" value="N=1-945"/>
</dbReference>
<dbReference type="PDB" id="6J30">
    <property type="method" value="EM"/>
    <property type="resolution" value="4.50 A"/>
    <property type="chains" value="N=1-945"/>
</dbReference>
<dbReference type="PDB" id="7QO3">
    <property type="method" value="EM"/>
    <property type="resolution" value="6.10 A"/>
    <property type="chains" value="N=1-945"/>
</dbReference>
<dbReference type="PDB" id="7QO5">
    <property type="method" value="EM"/>
    <property type="resolution" value="6.00 A"/>
    <property type="chains" value="N=1-945"/>
</dbReference>
<dbReference type="PDB" id="7QO6">
    <property type="method" value="EM"/>
    <property type="resolution" value="6.30 A"/>
    <property type="chains" value="N=1-945"/>
</dbReference>
<dbReference type="PDBsum" id="3JCO"/>
<dbReference type="PDBsum" id="3JCP"/>
<dbReference type="PDBsum" id="4ADY"/>
<dbReference type="PDBsum" id="4CR2"/>
<dbReference type="PDBsum" id="4CR3"/>
<dbReference type="PDBsum" id="4CR4"/>
<dbReference type="PDBsum" id="5A5B"/>
<dbReference type="PDBsum" id="5MPB"/>
<dbReference type="PDBsum" id="5MPC"/>
<dbReference type="PDBsum" id="5MPD"/>
<dbReference type="PDBsum" id="5MPE"/>
<dbReference type="PDBsum" id="5WVI"/>
<dbReference type="PDBsum" id="5WVK"/>
<dbReference type="PDBsum" id="6FVT"/>
<dbReference type="PDBsum" id="6FVU"/>
<dbReference type="PDBsum" id="6FVV"/>
<dbReference type="PDBsum" id="6FVW"/>
<dbReference type="PDBsum" id="6FVX"/>
<dbReference type="PDBsum" id="6FVY"/>
<dbReference type="PDBsum" id="6J2C"/>
<dbReference type="PDBsum" id="6J2N"/>
<dbReference type="PDBsum" id="6J2Q"/>
<dbReference type="PDBsum" id="6J2X"/>
<dbReference type="PDBsum" id="6J30"/>
<dbReference type="PDBsum" id="7QO3"/>
<dbReference type="PDBsum" id="7QO5"/>
<dbReference type="PDBsum" id="7QO6"/>
<dbReference type="EMDB" id="EMD-14082"/>
<dbReference type="EMDB" id="EMD-14084"/>
<dbReference type="EMDB" id="EMD-14085"/>
<dbReference type="EMDB" id="EMD-3536"/>
<dbReference type="EMDB" id="EMD-3537"/>
<dbReference type="EMDB" id="EMD-4321"/>
<dbReference type="EMDB" id="EMD-4322"/>
<dbReference type="EMDB" id="EMD-4323"/>
<dbReference type="EMDB" id="EMD-4324"/>
<dbReference type="EMDB" id="EMD-6693"/>
<dbReference type="EMDB" id="EMD-6694"/>
<dbReference type="EMDB" id="EMD-9769"/>
<dbReference type="EMDB" id="EMD-9770"/>
<dbReference type="EMDB" id="EMD-9771"/>
<dbReference type="EMDB" id="EMD-9772"/>
<dbReference type="EMDB" id="EMD-9773"/>
<dbReference type="SMR" id="P32565"/>
<dbReference type="BioGRID" id="34917">
    <property type="interactions" value="170"/>
</dbReference>
<dbReference type="ComplexPortal" id="CPX-2262">
    <property type="entry name" value="26S proteasome complex"/>
</dbReference>
<dbReference type="DIP" id="DIP-4638N"/>
<dbReference type="FunCoup" id="P32565">
    <property type="interactions" value="1741"/>
</dbReference>
<dbReference type="IntAct" id="P32565">
    <property type="interactions" value="106"/>
</dbReference>
<dbReference type="MINT" id="P32565"/>
<dbReference type="STRING" id="4932.YIL075C"/>
<dbReference type="GlyGen" id="P32565">
    <property type="glycosylation" value="1 site"/>
</dbReference>
<dbReference type="iPTMnet" id="P32565"/>
<dbReference type="PaxDb" id="4932-YIL075C"/>
<dbReference type="PeptideAtlas" id="P32565"/>
<dbReference type="EnsemblFungi" id="YIL075C_mRNA">
    <property type="protein sequence ID" value="YIL075C"/>
    <property type="gene ID" value="YIL075C"/>
</dbReference>
<dbReference type="GeneID" id="854735"/>
<dbReference type="KEGG" id="sce:YIL075C"/>
<dbReference type="AGR" id="SGD:S000001337"/>
<dbReference type="SGD" id="S000001337">
    <property type="gene designation" value="RPN2"/>
</dbReference>
<dbReference type="VEuPathDB" id="FungiDB:YIL075C"/>
<dbReference type="eggNOG" id="KOG2062">
    <property type="taxonomic scope" value="Eukaryota"/>
</dbReference>
<dbReference type="GeneTree" id="ENSGT00940000153386"/>
<dbReference type="HOGENOM" id="CLU_002323_0_0_1"/>
<dbReference type="InParanoid" id="P32565"/>
<dbReference type="OMA" id="IMFGRQE"/>
<dbReference type="OrthoDB" id="261572at2759"/>
<dbReference type="BioCyc" id="YEAST:G3O-31340-MONOMER"/>
<dbReference type="Reactome" id="R-SCE-1236978">
    <property type="pathway name" value="Cross-presentation of soluble exogenous antigens (endosomes)"/>
</dbReference>
<dbReference type="Reactome" id="R-SCE-5668541">
    <property type="pathway name" value="TNFR2 non-canonical NF-kB pathway"/>
</dbReference>
<dbReference type="Reactome" id="R-SCE-5687128">
    <property type="pathway name" value="MAPK6/MAPK4 signaling"/>
</dbReference>
<dbReference type="Reactome" id="R-SCE-5689880">
    <property type="pathway name" value="Ub-specific processing proteases"/>
</dbReference>
<dbReference type="Reactome" id="R-SCE-6798695">
    <property type="pathway name" value="Neutrophil degranulation"/>
</dbReference>
<dbReference type="Reactome" id="R-SCE-68949">
    <property type="pathway name" value="Orc1 removal from chromatin"/>
</dbReference>
<dbReference type="Reactome" id="R-SCE-69017">
    <property type="pathway name" value="CDK-mediated phosphorylation and removal of Cdc6"/>
</dbReference>
<dbReference type="Reactome" id="R-SCE-69601">
    <property type="pathway name" value="Ubiquitin Mediated Degradation of Phosphorylated Cdc25A"/>
</dbReference>
<dbReference type="Reactome" id="R-SCE-8854050">
    <property type="pathway name" value="FBXL7 down-regulates AURKA during mitotic entry and in early mitosis"/>
</dbReference>
<dbReference type="Reactome" id="R-SCE-8948751">
    <property type="pathway name" value="Regulation of PTEN stability and activity"/>
</dbReference>
<dbReference type="Reactome" id="R-SCE-8951664">
    <property type="pathway name" value="Neddylation"/>
</dbReference>
<dbReference type="Reactome" id="R-SCE-9755511">
    <property type="pathway name" value="KEAP1-NFE2L2 pathway"/>
</dbReference>
<dbReference type="Reactome" id="R-SCE-983168">
    <property type="pathway name" value="Antigen processing: Ubiquitination &amp; Proteasome degradation"/>
</dbReference>
<dbReference type="BioGRID-ORCS" id="854735">
    <property type="hits" value="7 hits in 10 CRISPR screens"/>
</dbReference>
<dbReference type="EvolutionaryTrace" id="P32565"/>
<dbReference type="PRO" id="PR:P32565"/>
<dbReference type="Proteomes" id="UP000002311">
    <property type="component" value="Chromosome IX"/>
</dbReference>
<dbReference type="RNAct" id="P32565">
    <property type="molecule type" value="protein"/>
</dbReference>
<dbReference type="GO" id="GO:0005634">
    <property type="term" value="C:nucleus"/>
    <property type="evidence" value="ECO:0000314"/>
    <property type="project" value="SGD"/>
</dbReference>
<dbReference type="GO" id="GO:0000502">
    <property type="term" value="C:proteasome complex"/>
    <property type="evidence" value="ECO:0000353"/>
    <property type="project" value="ComplexPortal"/>
</dbReference>
<dbReference type="GO" id="GO:0008540">
    <property type="term" value="C:proteasome regulatory particle, base subcomplex"/>
    <property type="evidence" value="ECO:0000314"/>
    <property type="project" value="SGD"/>
</dbReference>
<dbReference type="GO" id="GO:0034515">
    <property type="term" value="C:proteasome storage granule"/>
    <property type="evidence" value="ECO:0000314"/>
    <property type="project" value="SGD"/>
</dbReference>
<dbReference type="GO" id="GO:0030234">
    <property type="term" value="F:enzyme regulator activity"/>
    <property type="evidence" value="ECO:0007669"/>
    <property type="project" value="InterPro"/>
</dbReference>
<dbReference type="GO" id="GO:0031625">
    <property type="term" value="F:ubiquitin protein ligase binding"/>
    <property type="evidence" value="ECO:0000353"/>
    <property type="project" value="SGD"/>
</dbReference>
<dbReference type="GO" id="GO:0043248">
    <property type="term" value="P:proteasome assembly"/>
    <property type="evidence" value="ECO:0000316"/>
    <property type="project" value="SGD"/>
</dbReference>
<dbReference type="GO" id="GO:0043161">
    <property type="term" value="P:proteasome-mediated ubiquitin-dependent protein catabolic process"/>
    <property type="evidence" value="ECO:0000314"/>
    <property type="project" value="ComplexPortal"/>
</dbReference>
<dbReference type="GO" id="GO:0042176">
    <property type="term" value="P:regulation of protein catabolic process"/>
    <property type="evidence" value="ECO:0007669"/>
    <property type="project" value="InterPro"/>
</dbReference>
<dbReference type="GO" id="GO:0006511">
    <property type="term" value="P:ubiquitin-dependent protein catabolic process"/>
    <property type="evidence" value="ECO:0000315"/>
    <property type="project" value="SGD"/>
</dbReference>
<dbReference type="FunFam" id="1.25.10.10:FF:000017">
    <property type="entry name" value="26S proteasome non-ATPase regulatory subunit 1"/>
    <property type="match status" value="1"/>
</dbReference>
<dbReference type="Gene3D" id="1.25.10.10">
    <property type="entry name" value="Leucine-rich Repeat Variant"/>
    <property type="match status" value="1"/>
</dbReference>
<dbReference type="InterPro" id="IPR016642">
    <property type="entry name" value="26S_Psome_Rpn2"/>
</dbReference>
<dbReference type="InterPro" id="IPR011989">
    <property type="entry name" value="ARM-like"/>
</dbReference>
<dbReference type="InterPro" id="IPR016024">
    <property type="entry name" value="ARM-type_fold"/>
</dbReference>
<dbReference type="InterPro" id="IPR002015">
    <property type="entry name" value="Proteasome/cyclosome_rpt"/>
</dbReference>
<dbReference type="InterPro" id="IPR048570">
    <property type="entry name" value="PSMD1_RPN2_N"/>
</dbReference>
<dbReference type="InterPro" id="IPR040623">
    <property type="entry name" value="RPN2_C"/>
</dbReference>
<dbReference type="PANTHER" id="PTHR10943">
    <property type="entry name" value="26S PROTEASOME NON-ATPASE REGULATORY SUBUNIT"/>
    <property type="match status" value="1"/>
</dbReference>
<dbReference type="PANTHER" id="PTHR10943:SF2">
    <property type="entry name" value="26S PROTEASOME NON-ATPASE REGULATORY SUBUNIT 1"/>
    <property type="match status" value="1"/>
</dbReference>
<dbReference type="Pfam" id="PF13646">
    <property type="entry name" value="HEAT_2"/>
    <property type="match status" value="1"/>
</dbReference>
<dbReference type="Pfam" id="PF01851">
    <property type="entry name" value="PC_rep"/>
    <property type="match status" value="3"/>
</dbReference>
<dbReference type="Pfam" id="PF18004">
    <property type="entry name" value="RPN2_C"/>
    <property type="match status" value="1"/>
</dbReference>
<dbReference type="Pfam" id="PF21505">
    <property type="entry name" value="RPN2_N"/>
    <property type="match status" value="1"/>
</dbReference>
<dbReference type="PIRSF" id="PIRSF015947">
    <property type="entry name" value="26S_Psome_Rpn2"/>
    <property type="match status" value="1"/>
</dbReference>
<dbReference type="SUPFAM" id="SSF48371">
    <property type="entry name" value="ARM repeat"/>
    <property type="match status" value="1"/>
</dbReference>
<protein>
    <recommendedName>
        <fullName>26S proteasome regulatory subunit RPN2</fullName>
    </recommendedName>
</protein>
<sequence length="945" mass="104232">MSLTTAAPLLALLRENQDSVKTYALESINNVVDQLWSEISNELPDIEALYDDDTFSDREMAALIASKVYYNLGEYESAVKYALAAKDRFDIDEKSQFVETIVSKSIEMYVQEASKQYTKDEQFYTKDIIDPKLTSIFERMIEKCLKASELKLALGIALEGYRLDIIESALKSKLDQDSTSENVKIINYLLTLAITTVTNSKFRSSILRKSFDFLMNMPNCDYLTLNKVVVNLNDAGLALQLFKKLKEENDEGLSAQIAFDLVSSASQQLLEILVTELTAQGYDPALLNILSGLPTCDYYNTFLLNNKNIDIGLLNKSKSSLDGKFSLFHTAVSVANGFMHAGTTDNSFIKANLPWLGKAQNWAKFTATASLGVIHKGNLLEGKKVMAPYLPGSRASSRFIKGGSLYGLGLIYAGFGRDTTDYLKNIIVENSGTSGDEDVDVLLHGASLGIGLAAMGSANIEVYEALKEVLYNDSATSGEAAALGMGLCMLGTGKPEAIHDMFTYSQETQHGNITRGLAVGLALINYGRQELADDLITKMLASDESLLRYGGAFTIALAYAGTGNNSAVKRLLHVAVSDSNDDVRRAAVIALGFVLLRDYTTVPRIVQLLSKSHNAHVRCGTAFALGIACAGKGLQSAIDVLDPLTKDPVDFVRQAAMIALSMILIQQTEKLNPQVADINKNFLSVITNKHQEGLAKFGACVAQGIMNAGGRNVTIQLENADTGTLDTKSVVGLVMFSQFWYWFPLAHFLSLSFTPTTVIGIRGSDQAIPKFQMNCYAKEDAFSYPRMYEEASGKEVEKVATAVLSTTARAKARAKKTKKEKGPNEEEKKKEHEEKEKERETNKKGIKETKENDEEFYKNKYSSKPYKVDNMTRILPQQSRYISFIKDDRFVPVRKFKGNNGVVVLRDREPKEPVALIETVRQMKDVNAPLPTPFKVDDNVDFPSA</sequence>
<feature type="initiator methionine" description="Removed" evidence="3 8">
    <location>
        <position position="1"/>
    </location>
</feature>
<feature type="chain" id="PRO_0000173808" description="26S proteasome regulatory subunit RPN2">
    <location>
        <begin position="2"/>
        <end position="945"/>
    </location>
</feature>
<feature type="repeat" description="PC 1">
    <location>
        <begin position="366"/>
        <end position="399"/>
    </location>
</feature>
<feature type="repeat" description="PC 2">
    <location>
        <begin position="403"/>
        <end position="440"/>
    </location>
</feature>
<feature type="repeat" description="PC 3">
    <location>
        <begin position="445"/>
        <end position="479"/>
    </location>
</feature>
<feature type="repeat" description="PC 4">
    <location>
        <begin position="480"/>
        <end position="514"/>
    </location>
</feature>
<feature type="repeat" description="PC 5">
    <location>
        <begin position="516"/>
        <end position="549"/>
    </location>
</feature>
<feature type="repeat" description="PC 6">
    <location>
        <begin position="550"/>
        <end position="585"/>
    </location>
</feature>
<feature type="repeat" description="PC 7">
    <location>
        <begin position="586"/>
        <end position="618"/>
    </location>
</feature>
<feature type="repeat" description="PC 8">
    <location>
        <begin position="620"/>
        <end position="654"/>
    </location>
</feature>
<feature type="repeat" description="PC 9">
    <location>
        <begin position="655"/>
        <end position="692"/>
    </location>
</feature>
<feature type="repeat" description="PC 10">
    <location>
        <begin position="698"/>
        <end position="734"/>
    </location>
</feature>
<feature type="region of interest" description="Disordered" evidence="1">
    <location>
        <begin position="810"/>
        <end position="851"/>
    </location>
</feature>
<feature type="compositionally biased region" description="Basic residues" evidence="1">
    <location>
        <begin position="810"/>
        <end position="819"/>
    </location>
</feature>
<feature type="compositionally biased region" description="Basic and acidic residues" evidence="1">
    <location>
        <begin position="820"/>
        <end position="851"/>
    </location>
</feature>
<feature type="modified residue" description="N-acetylserine" evidence="3 8">
    <location>
        <position position="2"/>
    </location>
</feature>
<feature type="modified residue" description="Phosphothreonine" evidence="7">
    <location>
        <position position="801"/>
    </location>
</feature>
<feature type="modified residue" description="Phosphothreonine" evidence="7">
    <location>
        <position position="932"/>
    </location>
</feature>
<feature type="sequence conflict" description="In Ref. 1; AAA87613." evidence="6" ref="1">
    <original>SV</original>
    <variation>RL</variation>
    <location>
        <begin position="333"/>
        <end position="334"/>
    </location>
</feature>
<feature type="helix" evidence="9">
    <location>
        <begin position="7"/>
        <end position="12"/>
    </location>
</feature>
<feature type="helix" evidence="9">
    <location>
        <begin position="18"/>
        <end position="40"/>
    </location>
</feature>
<feature type="helix" evidence="9">
    <location>
        <begin position="43"/>
        <end position="50"/>
    </location>
</feature>
<feature type="helix" evidence="9">
    <location>
        <begin position="58"/>
        <end position="72"/>
    </location>
</feature>
<feature type="helix" evidence="9">
    <location>
        <begin position="75"/>
        <end position="85"/>
    </location>
</feature>
<feature type="helix" evidence="9">
    <location>
        <begin position="86"/>
        <end position="88"/>
    </location>
</feature>
<feature type="helix" evidence="9">
    <location>
        <begin position="96"/>
        <end position="119"/>
    </location>
</feature>
<feature type="helix" evidence="9">
    <location>
        <begin position="123"/>
        <end position="125"/>
    </location>
</feature>
<feature type="helix" evidence="9">
    <location>
        <begin position="131"/>
        <end position="147"/>
    </location>
</feature>
<feature type="helix" evidence="9">
    <location>
        <begin position="150"/>
        <end position="159"/>
    </location>
</feature>
<feature type="helix" evidence="9">
    <location>
        <begin position="163"/>
        <end position="173"/>
    </location>
</feature>
<feature type="helix" evidence="9">
    <location>
        <begin position="179"/>
        <end position="195"/>
    </location>
</feature>
<feature type="helix" evidence="9">
    <location>
        <begin position="200"/>
        <end position="216"/>
    </location>
</feature>
<feature type="strand" evidence="9">
    <location>
        <begin position="217"/>
        <end position="219"/>
    </location>
</feature>
<feature type="helix" evidence="9">
    <location>
        <begin position="222"/>
        <end position="232"/>
    </location>
</feature>
<feature type="helix" evidence="9">
    <location>
        <begin position="235"/>
        <end position="246"/>
    </location>
</feature>
<feature type="helix" evidence="9">
    <location>
        <begin position="251"/>
        <end position="264"/>
    </location>
</feature>
<feature type="helix" evidence="9">
    <location>
        <begin position="267"/>
        <end position="279"/>
    </location>
</feature>
<feature type="helix" evidence="9">
    <location>
        <begin position="284"/>
        <end position="289"/>
    </location>
</feature>
<feature type="helix" evidence="9">
    <location>
        <begin position="293"/>
        <end position="306"/>
    </location>
</feature>
<feature type="helix" evidence="9">
    <location>
        <begin position="311"/>
        <end position="320"/>
    </location>
</feature>
<feature type="helix" evidence="9">
    <location>
        <begin position="326"/>
        <end position="339"/>
    </location>
</feature>
<feature type="turn" evidence="9">
    <location>
        <begin position="340"/>
        <end position="343"/>
    </location>
</feature>
<feature type="helix" evidence="9">
    <location>
        <begin position="347"/>
        <end position="351"/>
    </location>
</feature>
<feature type="helix" evidence="9">
    <location>
        <begin position="353"/>
        <end position="358"/>
    </location>
</feature>
<feature type="helix" evidence="9">
    <location>
        <begin position="362"/>
        <end position="374"/>
    </location>
</feature>
<feature type="turn" evidence="9">
    <location>
        <begin position="379"/>
        <end position="381"/>
    </location>
</feature>
<feature type="helix" evidence="9">
    <location>
        <begin position="382"/>
        <end position="386"/>
    </location>
</feature>
<feature type="turn" evidence="9">
    <location>
        <begin position="387"/>
        <end position="389"/>
    </location>
</feature>
<feature type="helix" evidence="9">
    <location>
        <begin position="398"/>
        <end position="411"/>
    </location>
</feature>
<feature type="turn" evidence="9">
    <location>
        <begin position="412"/>
        <end position="416"/>
    </location>
</feature>
<feature type="helix" evidence="9">
    <location>
        <begin position="417"/>
        <end position="430"/>
    </location>
</feature>
<feature type="helix" evidence="9">
    <location>
        <begin position="437"/>
        <end position="453"/>
    </location>
</feature>
<feature type="helix" evidence="9">
    <location>
        <begin position="460"/>
        <end position="471"/>
    </location>
</feature>
<feature type="helix" evidence="9">
    <location>
        <begin position="475"/>
        <end position="489"/>
    </location>
</feature>
<feature type="helix" evidence="9">
    <location>
        <begin position="495"/>
        <end position="507"/>
    </location>
</feature>
<feature type="helix" evidence="9">
    <location>
        <begin position="511"/>
        <end position="524"/>
    </location>
</feature>
<feature type="turn" evidence="9">
    <location>
        <begin position="525"/>
        <end position="527"/>
    </location>
</feature>
<feature type="helix" evidence="9">
    <location>
        <begin position="529"/>
        <end position="532"/>
    </location>
</feature>
<feature type="helix" evidence="9">
    <location>
        <begin position="533"/>
        <end position="541"/>
    </location>
</feature>
<feature type="helix" evidence="9">
    <location>
        <begin position="545"/>
        <end position="558"/>
    </location>
</feature>
<feature type="turn" evidence="9">
    <location>
        <begin position="559"/>
        <end position="561"/>
    </location>
</feature>
<feature type="helix" evidence="9">
    <location>
        <begin position="565"/>
        <end position="577"/>
    </location>
</feature>
<feature type="helix" evidence="9">
    <location>
        <begin position="581"/>
        <end position="594"/>
    </location>
</feature>
<feature type="strand" evidence="9">
    <location>
        <begin position="596"/>
        <end position="598"/>
    </location>
</feature>
<feature type="helix" evidence="9">
    <location>
        <begin position="602"/>
        <end position="605"/>
    </location>
</feature>
<feature type="turn" evidence="9">
    <location>
        <begin position="606"/>
        <end position="608"/>
    </location>
</feature>
<feature type="helix" evidence="9">
    <location>
        <begin position="609"/>
        <end position="611"/>
    </location>
</feature>
<feature type="helix" evidence="9">
    <location>
        <begin position="615"/>
        <end position="628"/>
    </location>
</feature>
<feature type="strand" evidence="9">
    <location>
        <begin position="630"/>
        <end position="632"/>
    </location>
</feature>
<feature type="helix" evidence="9">
    <location>
        <begin position="635"/>
        <end position="645"/>
    </location>
</feature>
<feature type="helix" evidence="9">
    <location>
        <begin position="650"/>
        <end position="663"/>
    </location>
</feature>
<feature type="turn" evidence="9">
    <location>
        <begin position="669"/>
        <end position="671"/>
    </location>
</feature>
<feature type="helix" evidence="9">
    <location>
        <begin position="675"/>
        <end position="687"/>
    </location>
</feature>
<feature type="strand" evidence="9">
    <location>
        <begin position="689"/>
        <end position="691"/>
    </location>
</feature>
<feature type="helix" evidence="9">
    <location>
        <begin position="693"/>
        <end position="706"/>
    </location>
</feature>
<feature type="helix" evidence="9">
    <location>
        <begin position="709"/>
        <end position="711"/>
    </location>
</feature>
<feature type="strand" evidence="9">
    <location>
        <begin position="713"/>
        <end position="715"/>
    </location>
</feature>
<feature type="turn" evidence="9">
    <location>
        <begin position="720"/>
        <end position="722"/>
    </location>
</feature>
<feature type="helix" evidence="9">
    <location>
        <begin position="727"/>
        <end position="736"/>
    </location>
</feature>
<feature type="turn" evidence="9">
    <location>
        <begin position="737"/>
        <end position="741"/>
    </location>
</feature>
<feature type="helix" evidence="9">
    <location>
        <begin position="743"/>
        <end position="752"/>
    </location>
</feature>
<feature type="strand" evidence="9">
    <location>
        <begin position="753"/>
        <end position="755"/>
    </location>
</feature>
<feature type="strand" evidence="9">
    <location>
        <begin position="757"/>
        <end position="762"/>
    </location>
</feature>
<feature type="turn" evidence="9">
    <location>
        <begin position="763"/>
        <end position="766"/>
    </location>
</feature>
<feature type="strand" evidence="9">
    <location>
        <begin position="767"/>
        <end position="769"/>
    </location>
</feature>
<feature type="strand" evidence="9">
    <location>
        <begin position="772"/>
        <end position="775"/>
    </location>
</feature>
<feature type="turn" evidence="9">
    <location>
        <begin position="779"/>
        <end position="782"/>
    </location>
</feature>
<feature type="strand" evidence="9">
    <location>
        <begin position="866"/>
        <end position="869"/>
    </location>
</feature>
<feature type="helix" evidence="9">
    <location>
        <begin position="878"/>
        <end position="881"/>
    </location>
</feature>
<feature type="strand" evidence="9">
    <location>
        <begin position="886"/>
        <end position="894"/>
    </location>
</feature>
<feature type="strand" evidence="9">
    <location>
        <begin position="898"/>
        <end position="908"/>
    </location>
</feature>
<feature type="helix" evidence="9">
    <location>
        <begin position="920"/>
        <end position="924"/>
    </location>
</feature>
<proteinExistence type="evidence at protein level"/>
<evidence type="ECO:0000256" key="1">
    <source>
        <dbReference type="SAM" id="MobiDB-lite"/>
    </source>
</evidence>
<evidence type="ECO:0000269" key="2">
    <source>
    </source>
</evidence>
<evidence type="ECO:0000269" key="3">
    <source>
    </source>
</evidence>
<evidence type="ECO:0000269" key="4">
    <source>
    </source>
</evidence>
<evidence type="ECO:0000269" key="5">
    <source>
    </source>
</evidence>
<evidence type="ECO:0000305" key="6"/>
<evidence type="ECO:0007744" key="7">
    <source>
    </source>
</evidence>
<evidence type="ECO:0007744" key="8">
    <source>
    </source>
</evidence>
<evidence type="ECO:0007829" key="9">
    <source>
        <dbReference type="PDB" id="4ADY"/>
    </source>
</evidence>
<organism>
    <name type="scientific">Saccharomyces cerevisiae (strain ATCC 204508 / S288c)</name>
    <name type="common">Baker's yeast</name>
    <dbReference type="NCBI Taxonomy" id="559292"/>
    <lineage>
        <taxon>Eukaryota</taxon>
        <taxon>Fungi</taxon>
        <taxon>Dikarya</taxon>
        <taxon>Ascomycota</taxon>
        <taxon>Saccharomycotina</taxon>
        <taxon>Saccharomycetes</taxon>
        <taxon>Saccharomycetales</taxon>
        <taxon>Saccharomycetaceae</taxon>
        <taxon>Saccharomyces</taxon>
    </lineage>
</organism>
<reference key="1">
    <citation type="journal article" date="1995" name="Mol. Cell. Biol.">
        <title>The yeast SEN3 gene encodes a regulatory subunit of the 26S proteasome complex required for ubiquitin-dependent protein degradation in vivo.</title>
        <authorList>
            <person name="Demarini D.J."/>
            <person name="Papa F.R."/>
            <person name="Swaminathan S."/>
            <person name="Ursic D."/>
            <person name="Rasmussen T.P."/>
            <person name="Culbertson M.R."/>
            <person name="Hochstrasser M."/>
        </authorList>
    </citation>
    <scope>NUCLEOTIDE SEQUENCE [GENOMIC DNA]</scope>
</reference>
<reference key="2">
    <citation type="journal article" date="1997" name="Nature">
        <title>The nucleotide sequence of Saccharomyces cerevisiae chromosome IX.</title>
        <authorList>
            <person name="Churcher C.M."/>
            <person name="Bowman S."/>
            <person name="Badcock K."/>
            <person name="Bankier A.T."/>
            <person name="Brown D."/>
            <person name="Chillingworth T."/>
            <person name="Connor R."/>
            <person name="Devlin K."/>
            <person name="Gentles S."/>
            <person name="Hamlin N."/>
            <person name="Harris D.E."/>
            <person name="Horsnell T."/>
            <person name="Hunt S."/>
            <person name="Jagels K."/>
            <person name="Jones M."/>
            <person name="Lye G."/>
            <person name="Moule S."/>
            <person name="Odell C."/>
            <person name="Pearson D."/>
            <person name="Rajandream M.A."/>
            <person name="Rice P."/>
            <person name="Rowley N."/>
            <person name="Skelton J."/>
            <person name="Smith V."/>
            <person name="Walsh S.V."/>
            <person name="Whitehead S."/>
            <person name="Barrell B.G."/>
        </authorList>
    </citation>
    <scope>NUCLEOTIDE SEQUENCE [LARGE SCALE GENOMIC DNA]</scope>
    <source>
        <strain>ATCC 204508 / S288c</strain>
    </source>
</reference>
<reference key="3">
    <citation type="journal article" date="2014" name="G3 (Bethesda)">
        <title>The reference genome sequence of Saccharomyces cerevisiae: Then and now.</title>
        <authorList>
            <person name="Engel S.R."/>
            <person name="Dietrich F.S."/>
            <person name="Fisk D.G."/>
            <person name="Binkley G."/>
            <person name="Balakrishnan R."/>
            <person name="Costanzo M.C."/>
            <person name="Dwight S.S."/>
            <person name="Hitz B.C."/>
            <person name="Karra K."/>
            <person name="Nash R.S."/>
            <person name="Weng S."/>
            <person name="Wong E.D."/>
            <person name="Lloyd P."/>
            <person name="Skrzypek M.S."/>
            <person name="Miyasato S.R."/>
            <person name="Simison M."/>
            <person name="Cherry J.M."/>
        </authorList>
    </citation>
    <scope>GENOME REANNOTATION</scope>
    <source>
        <strain>ATCC 204508 / S288c</strain>
    </source>
</reference>
<reference key="4">
    <citation type="journal article" date="2003" name="Arch. Biochem. Biophys.">
        <title>N-terminal modifications of the 19S regulatory particle subunits of the yeast proteasome.</title>
        <authorList>
            <person name="Kimura Y."/>
            <person name="Saeki Y."/>
            <person name="Yokosawa H."/>
            <person name="Polevoda B."/>
            <person name="Sherman F."/>
            <person name="Hirano H."/>
        </authorList>
    </citation>
    <scope>PROTEIN SEQUENCE OF 2-9</scope>
    <scope>ACETYLATION AT SER-2</scope>
</reference>
<reference key="5">
    <citation type="journal article" date="1998" name="Mol. Cell. Biol.">
        <title>The regulatory particle of the Saccharomyces cerevisiae proteasome.</title>
        <authorList>
            <person name="Glickman M.H."/>
            <person name="Rubin D.M."/>
            <person name="Fried V.A."/>
            <person name="Finley D."/>
        </authorList>
    </citation>
    <scope>FUNCTION</scope>
</reference>
<reference key="6">
    <citation type="journal article" date="2000" name="Proc. Natl. Acad. Sci. U.S.A.">
        <title>Physical association of ubiquitin ligases and the 26S proteasome.</title>
        <authorList>
            <person name="Xie Y."/>
            <person name="Varshavsky A."/>
        </authorList>
    </citation>
    <scope>INTERACTION WITH UBR1</scope>
</reference>
<reference key="7">
    <citation type="journal article" date="2003" name="Nature">
        <title>Global analysis of protein expression in yeast.</title>
        <authorList>
            <person name="Ghaemmaghami S."/>
            <person name="Huh W.-K."/>
            <person name="Bower K."/>
            <person name="Howson R.W."/>
            <person name="Belle A."/>
            <person name="Dephoure N."/>
            <person name="O'Shea E.K."/>
            <person name="Weissman J.S."/>
        </authorList>
    </citation>
    <scope>LEVEL OF PROTEIN EXPRESSION [LARGE SCALE ANALYSIS]</scope>
</reference>
<reference key="8">
    <citation type="journal article" date="2008" name="Mol. Cell. Proteomics">
        <title>A multidimensional chromatography technology for in-depth phosphoproteome analysis.</title>
        <authorList>
            <person name="Albuquerque C.P."/>
            <person name="Smolka M.B."/>
            <person name="Payne S.H."/>
            <person name="Bafna V."/>
            <person name="Eng J."/>
            <person name="Zhou H."/>
        </authorList>
    </citation>
    <scope>PHOSPHORYLATION [LARGE SCALE ANALYSIS] AT THR-801 AND THR-932</scope>
    <scope>IDENTIFICATION BY MASS SPECTROMETRY [LARGE SCALE ANALYSIS]</scope>
</reference>
<reference key="9">
    <citation type="journal article" date="2012" name="Proc. Natl. Acad. Sci. U.S.A.">
        <title>N-terminal acetylome analyses and functional insights of the N-terminal acetyltransferase NatB.</title>
        <authorList>
            <person name="Van Damme P."/>
            <person name="Lasa M."/>
            <person name="Polevoda B."/>
            <person name="Gazquez C."/>
            <person name="Elosegui-Artola A."/>
            <person name="Kim D.S."/>
            <person name="De Juan-Pardo E."/>
            <person name="Demeyer K."/>
            <person name="Hole K."/>
            <person name="Larrea E."/>
            <person name="Timmerman E."/>
            <person name="Prieto J."/>
            <person name="Arnesen T."/>
            <person name="Sherman F."/>
            <person name="Gevaert K."/>
            <person name="Aldabe R."/>
        </authorList>
    </citation>
    <scope>ACETYLATION [LARGE SCALE ANALYSIS] AT SER-2</scope>
    <scope>CLEAVAGE OF INITIATOR METHIONINE [LARGE SCALE ANALYSIS]</scope>
    <scope>IDENTIFICATION BY MASS SPECTROMETRY [LARGE SCALE ANALYSIS]</scope>
</reference>
<reference key="10">
    <citation type="journal article" date="2012" name="Proc. Natl. Acad. Sci. U.S.A.">
        <title>Near-atomic resolution structural model of the yeast 26S proteasome.</title>
        <authorList>
            <person name="Beck F."/>
            <person name="Unverdorben P."/>
            <person name="Bohn S."/>
            <person name="Schweitzer A."/>
            <person name="Pfeifer G."/>
            <person name="Sakata E."/>
            <person name="Nickell S."/>
            <person name="Plitzko J.M."/>
            <person name="Villa E."/>
            <person name="Baumeister W."/>
            <person name="Forster F."/>
        </authorList>
    </citation>
    <scope>STRUCTURE BY ELECTRON MICROSCOPY (7.4 ANGSTROMS) OF THE 26S PROTEASOME</scope>
</reference>